<evidence type="ECO:0000255" key="1">
    <source>
        <dbReference type="HAMAP-Rule" id="MF_00097"/>
    </source>
</evidence>
<name>THIE_HELPH</name>
<reference key="1">
    <citation type="journal article" date="2006" name="Proc. Natl. Acad. Sci. U.S.A.">
        <title>The complete genome sequence of a chronic atrophic gastritis Helicobacter pylori strain: evolution during disease progression.</title>
        <authorList>
            <person name="Oh J.D."/>
            <person name="Kling-Baeckhed H."/>
            <person name="Giannakis M."/>
            <person name="Xu J."/>
            <person name="Fulton R.S."/>
            <person name="Fulton L.A."/>
            <person name="Cordum H.S."/>
            <person name="Wang C."/>
            <person name="Elliott G."/>
            <person name="Edwards J."/>
            <person name="Mardis E.R."/>
            <person name="Engstrand L.G."/>
            <person name="Gordon J.I."/>
        </authorList>
    </citation>
    <scope>NUCLEOTIDE SEQUENCE [LARGE SCALE GENOMIC DNA]</scope>
    <source>
        <strain>HPAG1</strain>
    </source>
</reference>
<keyword id="KW-0460">Magnesium</keyword>
<keyword id="KW-0479">Metal-binding</keyword>
<keyword id="KW-0784">Thiamine biosynthesis</keyword>
<keyword id="KW-0808">Transferase</keyword>
<comment type="function">
    <text evidence="1">Condenses 4-methyl-5-(beta-hydroxyethyl)thiazole monophosphate (THZ-P) and 2-methyl-4-amino-5-hydroxymethyl pyrimidine pyrophosphate (HMP-PP) to form thiamine monophosphate (TMP).</text>
</comment>
<comment type="catalytic activity">
    <reaction evidence="1">
        <text>2-[(2R,5Z)-2-carboxy-4-methylthiazol-5(2H)-ylidene]ethyl phosphate + 4-amino-2-methyl-5-(diphosphooxymethyl)pyrimidine + 2 H(+) = thiamine phosphate + CO2 + diphosphate</text>
        <dbReference type="Rhea" id="RHEA:47844"/>
        <dbReference type="ChEBI" id="CHEBI:15378"/>
        <dbReference type="ChEBI" id="CHEBI:16526"/>
        <dbReference type="ChEBI" id="CHEBI:33019"/>
        <dbReference type="ChEBI" id="CHEBI:37575"/>
        <dbReference type="ChEBI" id="CHEBI:57841"/>
        <dbReference type="ChEBI" id="CHEBI:62899"/>
        <dbReference type="EC" id="2.5.1.3"/>
    </reaction>
</comment>
<comment type="catalytic activity">
    <reaction evidence="1">
        <text>2-(2-carboxy-4-methylthiazol-5-yl)ethyl phosphate + 4-amino-2-methyl-5-(diphosphooxymethyl)pyrimidine + 2 H(+) = thiamine phosphate + CO2 + diphosphate</text>
        <dbReference type="Rhea" id="RHEA:47848"/>
        <dbReference type="ChEBI" id="CHEBI:15378"/>
        <dbReference type="ChEBI" id="CHEBI:16526"/>
        <dbReference type="ChEBI" id="CHEBI:33019"/>
        <dbReference type="ChEBI" id="CHEBI:37575"/>
        <dbReference type="ChEBI" id="CHEBI:57841"/>
        <dbReference type="ChEBI" id="CHEBI:62890"/>
        <dbReference type="EC" id="2.5.1.3"/>
    </reaction>
</comment>
<comment type="catalytic activity">
    <reaction evidence="1">
        <text>4-methyl-5-(2-phosphooxyethyl)-thiazole + 4-amino-2-methyl-5-(diphosphooxymethyl)pyrimidine + H(+) = thiamine phosphate + diphosphate</text>
        <dbReference type="Rhea" id="RHEA:22328"/>
        <dbReference type="ChEBI" id="CHEBI:15378"/>
        <dbReference type="ChEBI" id="CHEBI:33019"/>
        <dbReference type="ChEBI" id="CHEBI:37575"/>
        <dbReference type="ChEBI" id="CHEBI:57841"/>
        <dbReference type="ChEBI" id="CHEBI:58296"/>
        <dbReference type="EC" id="2.5.1.3"/>
    </reaction>
</comment>
<comment type="cofactor">
    <cofactor evidence="1">
        <name>Mg(2+)</name>
        <dbReference type="ChEBI" id="CHEBI:18420"/>
    </cofactor>
    <text evidence="1">Binds 1 Mg(2+) ion per subunit.</text>
</comment>
<comment type="pathway">
    <text evidence="1">Cofactor biosynthesis; thiamine diphosphate biosynthesis; thiamine phosphate from 4-amino-2-methyl-5-diphosphomethylpyrimidine and 4-methyl-5-(2-phosphoethyl)-thiazole: step 1/1.</text>
</comment>
<comment type="similarity">
    <text evidence="1">Belongs to the thiamine-phosphate synthase family.</text>
</comment>
<feature type="chain" id="PRO_1000008143" description="Thiamine-phosphate synthase">
    <location>
        <begin position="1"/>
        <end position="219"/>
    </location>
</feature>
<feature type="binding site" evidence="1">
    <location>
        <begin position="48"/>
        <end position="52"/>
    </location>
    <ligand>
        <name>4-amino-2-methyl-5-(diphosphooxymethyl)pyrimidine</name>
        <dbReference type="ChEBI" id="CHEBI:57841"/>
    </ligand>
</feature>
<feature type="binding site" evidence="1">
    <location>
        <position position="84"/>
    </location>
    <ligand>
        <name>4-amino-2-methyl-5-(diphosphooxymethyl)pyrimidine</name>
        <dbReference type="ChEBI" id="CHEBI:57841"/>
    </ligand>
</feature>
<feature type="binding site" evidence="1">
    <location>
        <position position="85"/>
    </location>
    <ligand>
        <name>Mg(2+)</name>
        <dbReference type="ChEBI" id="CHEBI:18420"/>
    </ligand>
</feature>
<feature type="binding site" evidence="1">
    <location>
        <position position="104"/>
    </location>
    <ligand>
        <name>Mg(2+)</name>
        <dbReference type="ChEBI" id="CHEBI:18420"/>
    </ligand>
</feature>
<feature type="binding site" evidence="1">
    <location>
        <position position="123"/>
    </location>
    <ligand>
        <name>4-amino-2-methyl-5-(diphosphooxymethyl)pyrimidine</name>
        <dbReference type="ChEBI" id="CHEBI:57841"/>
    </ligand>
</feature>
<feature type="binding site" evidence="1">
    <location>
        <begin position="150"/>
        <end position="152"/>
    </location>
    <ligand>
        <name>2-[(2R,5Z)-2-carboxy-4-methylthiazol-5(2H)-ylidene]ethyl phosphate</name>
        <dbReference type="ChEBI" id="CHEBI:62899"/>
    </ligand>
</feature>
<feature type="binding site" evidence="1">
    <location>
        <position position="153"/>
    </location>
    <ligand>
        <name>4-amino-2-methyl-5-(diphosphooxymethyl)pyrimidine</name>
        <dbReference type="ChEBI" id="CHEBI:57841"/>
    </ligand>
</feature>
<feature type="binding site" evidence="1">
    <location>
        <position position="181"/>
    </location>
    <ligand>
        <name>2-[(2R,5Z)-2-carboxy-4-methylthiazol-5(2H)-ylidene]ethyl phosphate</name>
        <dbReference type="ChEBI" id="CHEBI:62899"/>
    </ligand>
</feature>
<feature type="binding site" evidence="1">
    <location>
        <begin position="199"/>
        <end position="200"/>
    </location>
    <ligand>
        <name>2-[(2R,5Z)-2-carboxy-4-methylthiazol-5(2H)-ylidene]ethyl phosphate</name>
        <dbReference type="ChEBI" id="CHEBI:62899"/>
    </ligand>
</feature>
<gene>
    <name evidence="1" type="primary">thiE</name>
    <name type="ordered locus">HPAG1_0828</name>
</gene>
<organism>
    <name type="scientific">Helicobacter pylori (strain HPAG1)</name>
    <dbReference type="NCBI Taxonomy" id="357544"/>
    <lineage>
        <taxon>Bacteria</taxon>
        <taxon>Pseudomonadati</taxon>
        <taxon>Campylobacterota</taxon>
        <taxon>Epsilonproteobacteria</taxon>
        <taxon>Campylobacterales</taxon>
        <taxon>Helicobacteraceae</taxon>
        <taxon>Helicobacter</taxon>
    </lineage>
</organism>
<proteinExistence type="inferred from homology"/>
<dbReference type="EC" id="2.5.1.3" evidence="1"/>
<dbReference type="EMBL" id="CP000241">
    <property type="protein sequence ID" value="ABF84895.1"/>
    <property type="molecule type" value="Genomic_DNA"/>
</dbReference>
<dbReference type="RefSeq" id="WP_000459009.1">
    <property type="nucleotide sequence ID" value="NC_008086.1"/>
</dbReference>
<dbReference type="SMR" id="Q1CT27"/>
<dbReference type="KEGG" id="hpa:HPAG1_0828"/>
<dbReference type="HOGENOM" id="CLU_018272_3_2_7"/>
<dbReference type="UniPathway" id="UPA00060">
    <property type="reaction ID" value="UER00141"/>
</dbReference>
<dbReference type="GO" id="GO:0005737">
    <property type="term" value="C:cytoplasm"/>
    <property type="evidence" value="ECO:0007669"/>
    <property type="project" value="TreeGrafter"/>
</dbReference>
<dbReference type="GO" id="GO:0000287">
    <property type="term" value="F:magnesium ion binding"/>
    <property type="evidence" value="ECO:0007669"/>
    <property type="project" value="UniProtKB-UniRule"/>
</dbReference>
<dbReference type="GO" id="GO:0004789">
    <property type="term" value="F:thiamine-phosphate diphosphorylase activity"/>
    <property type="evidence" value="ECO:0007669"/>
    <property type="project" value="UniProtKB-UniRule"/>
</dbReference>
<dbReference type="GO" id="GO:0009228">
    <property type="term" value="P:thiamine biosynthetic process"/>
    <property type="evidence" value="ECO:0007669"/>
    <property type="project" value="UniProtKB-KW"/>
</dbReference>
<dbReference type="GO" id="GO:0009229">
    <property type="term" value="P:thiamine diphosphate biosynthetic process"/>
    <property type="evidence" value="ECO:0007669"/>
    <property type="project" value="UniProtKB-UniRule"/>
</dbReference>
<dbReference type="CDD" id="cd00564">
    <property type="entry name" value="TMP_TenI"/>
    <property type="match status" value="1"/>
</dbReference>
<dbReference type="FunFam" id="3.20.20.70:FF:000096">
    <property type="entry name" value="Thiamine-phosphate synthase"/>
    <property type="match status" value="1"/>
</dbReference>
<dbReference type="Gene3D" id="3.20.20.70">
    <property type="entry name" value="Aldolase class I"/>
    <property type="match status" value="1"/>
</dbReference>
<dbReference type="HAMAP" id="MF_00097">
    <property type="entry name" value="TMP_synthase"/>
    <property type="match status" value="1"/>
</dbReference>
<dbReference type="InterPro" id="IPR013785">
    <property type="entry name" value="Aldolase_TIM"/>
</dbReference>
<dbReference type="InterPro" id="IPR036206">
    <property type="entry name" value="ThiamineP_synth_sf"/>
</dbReference>
<dbReference type="InterPro" id="IPR022998">
    <property type="entry name" value="ThiamineP_synth_TenI"/>
</dbReference>
<dbReference type="InterPro" id="IPR034291">
    <property type="entry name" value="TMP_synthase"/>
</dbReference>
<dbReference type="NCBIfam" id="TIGR00693">
    <property type="entry name" value="thiE"/>
    <property type="match status" value="1"/>
</dbReference>
<dbReference type="PANTHER" id="PTHR20857">
    <property type="entry name" value="THIAMINE-PHOSPHATE PYROPHOSPHORYLASE"/>
    <property type="match status" value="1"/>
</dbReference>
<dbReference type="PANTHER" id="PTHR20857:SF15">
    <property type="entry name" value="THIAMINE-PHOSPHATE SYNTHASE"/>
    <property type="match status" value="1"/>
</dbReference>
<dbReference type="Pfam" id="PF02581">
    <property type="entry name" value="TMP-TENI"/>
    <property type="match status" value="1"/>
</dbReference>
<dbReference type="SUPFAM" id="SSF51391">
    <property type="entry name" value="Thiamin phosphate synthase"/>
    <property type="match status" value="1"/>
</dbReference>
<protein>
    <recommendedName>
        <fullName evidence="1">Thiamine-phosphate synthase</fullName>
        <shortName evidence="1">TP synthase</shortName>
        <shortName evidence="1">TPS</shortName>
        <ecNumber evidence="1">2.5.1.3</ecNumber>
    </recommendedName>
    <alternativeName>
        <fullName evidence="1">Thiamine-phosphate pyrophosphorylase</fullName>
        <shortName evidence="1">TMP pyrophosphorylase</shortName>
        <shortName evidence="1">TMP-PPase</shortName>
    </alternativeName>
</protein>
<sequence>MFDANCLKLMFVAGSQDFYHIKGGKNDRINALLDTLELALQSQITAFQFRQKGDLALQDPVEIKQLALKCQKLCQKYGTPFIINDEVRLALELKADGVHVGQEDMAIEEVIALCKKHQFIGLSVNTLEQALKARHLDAVAYFGVGPIFPTPSKKDKQVVGVELLKKIRDSGVKKPLIAIGGITTHNASKLREYGGIAVISAITQARDKALAIEKLLNNA</sequence>
<accession>Q1CT27</accession>